<feature type="chain" id="PRO_1000142344" description="Large ribosomal subunit protein uL5">
    <location>
        <begin position="1"/>
        <end position="178"/>
    </location>
</feature>
<keyword id="KW-0687">Ribonucleoprotein</keyword>
<keyword id="KW-0689">Ribosomal protein</keyword>
<keyword id="KW-0694">RNA-binding</keyword>
<keyword id="KW-0699">rRNA-binding</keyword>
<keyword id="KW-0820">tRNA-binding</keyword>
<protein>
    <recommendedName>
        <fullName evidence="1">Large ribosomal subunit protein uL5</fullName>
    </recommendedName>
    <alternativeName>
        <fullName evidence="2">50S ribosomal protein L5</fullName>
    </alternativeName>
</protein>
<organism>
    <name type="scientific">Acinetobacter baumannii (strain AYE)</name>
    <dbReference type="NCBI Taxonomy" id="509173"/>
    <lineage>
        <taxon>Bacteria</taxon>
        <taxon>Pseudomonadati</taxon>
        <taxon>Pseudomonadota</taxon>
        <taxon>Gammaproteobacteria</taxon>
        <taxon>Moraxellales</taxon>
        <taxon>Moraxellaceae</taxon>
        <taxon>Acinetobacter</taxon>
        <taxon>Acinetobacter calcoaceticus/baumannii complex</taxon>
    </lineage>
</organism>
<evidence type="ECO:0000255" key="1">
    <source>
        <dbReference type="HAMAP-Rule" id="MF_01333"/>
    </source>
</evidence>
<evidence type="ECO:0000305" key="2"/>
<reference key="1">
    <citation type="journal article" date="2008" name="PLoS ONE">
        <title>Comparative analysis of Acinetobacters: three genomes for three lifestyles.</title>
        <authorList>
            <person name="Vallenet D."/>
            <person name="Nordmann P."/>
            <person name="Barbe V."/>
            <person name="Poirel L."/>
            <person name="Mangenot S."/>
            <person name="Bataille E."/>
            <person name="Dossat C."/>
            <person name="Gas S."/>
            <person name="Kreimeyer A."/>
            <person name="Lenoble P."/>
            <person name="Oztas S."/>
            <person name="Poulain J."/>
            <person name="Segurens B."/>
            <person name="Robert C."/>
            <person name="Abergel C."/>
            <person name="Claverie J.-M."/>
            <person name="Raoult D."/>
            <person name="Medigue C."/>
            <person name="Weissenbach J."/>
            <person name="Cruveiller S."/>
        </authorList>
    </citation>
    <scope>NUCLEOTIDE SEQUENCE [LARGE SCALE GENOMIC DNA]</scope>
    <source>
        <strain>AYE</strain>
    </source>
</reference>
<name>RL5_ACIBY</name>
<sequence>MARLKARYNDELKAKLQEELSIKNVMEIPRITKITLNMGVGAAATDKKLLDGAVADMQLIAGQKPVVTLARKSIAGFKIRDGWPIGCKVTLRGDQMYEFLDRLISIAIPRIRDFRGFSAKSFDGRGNYSMGLKEQIVFPEIDFDKIDRIRGMDITITTTARTDDEGRALMRAFGFPFK</sequence>
<accession>B0V6V7</accession>
<gene>
    <name evidence="1" type="primary">rplE</name>
    <name type="ordered locus">ABAYE0420</name>
</gene>
<proteinExistence type="inferred from homology"/>
<comment type="function">
    <text evidence="1">This is one of the proteins that bind and probably mediate the attachment of the 5S RNA into the large ribosomal subunit, where it forms part of the central protuberance. In the 70S ribosome it contacts protein S13 of the 30S subunit (bridge B1b), connecting the 2 subunits; this bridge is implicated in subunit movement. Contacts the P site tRNA; the 5S rRNA and some of its associated proteins might help stabilize positioning of ribosome-bound tRNAs.</text>
</comment>
<comment type="subunit">
    <text evidence="1">Part of the 50S ribosomal subunit; part of the 5S rRNA/L5/L18/L25 subcomplex. Contacts the 5S rRNA and the P site tRNA. Forms a bridge to the 30S subunit in the 70S ribosome.</text>
</comment>
<comment type="similarity">
    <text evidence="1">Belongs to the universal ribosomal protein uL5 family.</text>
</comment>
<dbReference type="EMBL" id="CU459141">
    <property type="protein sequence ID" value="CAM85394.1"/>
    <property type="molecule type" value="Genomic_DNA"/>
</dbReference>
<dbReference type="RefSeq" id="WP_000113197.1">
    <property type="nucleotide sequence ID" value="NZ_JBDGFB010000011.1"/>
</dbReference>
<dbReference type="SMR" id="B0V6V7"/>
<dbReference type="EnsemblBacteria" id="CAM85394">
    <property type="protein sequence ID" value="CAM85394"/>
    <property type="gene ID" value="ABAYE0420"/>
</dbReference>
<dbReference type="GeneID" id="92895305"/>
<dbReference type="KEGG" id="aby:ABAYE0420"/>
<dbReference type="HOGENOM" id="CLU_061015_2_1_6"/>
<dbReference type="GO" id="GO:1990904">
    <property type="term" value="C:ribonucleoprotein complex"/>
    <property type="evidence" value="ECO:0007669"/>
    <property type="project" value="UniProtKB-KW"/>
</dbReference>
<dbReference type="GO" id="GO:0005840">
    <property type="term" value="C:ribosome"/>
    <property type="evidence" value="ECO:0007669"/>
    <property type="project" value="UniProtKB-KW"/>
</dbReference>
<dbReference type="GO" id="GO:0019843">
    <property type="term" value="F:rRNA binding"/>
    <property type="evidence" value="ECO:0007669"/>
    <property type="project" value="UniProtKB-UniRule"/>
</dbReference>
<dbReference type="GO" id="GO:0003735">
    <property type="term" value="F:structural constituent of ribosome"/>
    <property type="evidence" value="ECO:0007669"/>
    <property type="project" value="InterPro"/>
</dbReference>
<dbReference type="GO" id="GO:0000049">
    <property type="term" value="F:tRNA binding"/>
    <property type="evidence" value="ECO:0007669"/>
    <property type="project" value="UniProtKB-UniRule"/>
</dbReference>
<dbReference type="GO" id="GO:0006412">
    <property type="term" value="P:translation"/>
    <property type="evidence" value="ECO:0007669"/>
    <property type="project" value="UniProtKB-UniRule"/>
</dbReference>
<dbReference type="FunFam" id="3.30.1440.10:FF:000001">
    <property type="entry name" value="50S ribosomal protein L5"/>
    <property type="match status" value="1"/>
</dbReference>
<dbReference type="Gene3D" id="3.30.1440.10">
    <property type="match status" value="1"/>
</dbReference>
<dbReference type="HAMAP" id="MF_01333_B">
    <property type="entry name" value="Ribosomal_uL5_B"/>
    <property type="match status" value="1"/>
</dbReference>
<dbReference type="InterPro" id="IPR002132">
    <property type="entry name" value="Ribosomal_uL5"/>
</dbReference>
<dbReference type="InterPro" id="IPR020930">
    <property type="entry name" value="Ribosomal_uL5_bac-type"/>
</dbReference>
<dbReference type="InterPro" id="IPR031309">
    <property type="entry name" value="Ribosomal_uL5_C"/>
</dbReference>
<dbReference type="InterPro" id="IPR020929">
    <property type="entry name" value="Ribosomal_uL5_CS"/>
</dbReference>
<dbReference type="InterPro" id="IPR022803">
    <property type="entry name" value="Ribosomal_uL5_dom_sf"/>
</dbReference>
<dbReference type="InterPro" id="IPR031310">
    <property type="entry name" value="Ribosomal_uL5_N"/>
</dbReference>
<dbReference type="NCBIfam" id="NF000585">
    <property type="entry name" value="PRK00010.1"/>
    <property type="match status" value="1"/>
</dbReference>
<dbReference type="PANTHER" id="PTHR11994">
    <property type="entry name" value="60S RIBOSOMAL PROTEIN L11-RELATED"/>
    <property type="match status" value="1"/>
</dbReference>
<dbReference type="Pfam" id="PF00281">
    <property type="entry name" value="Ribosomal_L5"/>
    <property type="match status" value="1"/>
</dbReference>
<dbReference type="Pfam" id="PF00673">
    <property type="entry name" value="Ribosomal_L5_C"/>
    <property type="match status" value="1"/>
</dbReference>
<dbReference type="PIRSF" id="PIRSF002161">
    <property type="entry name" value="Ribosomal_L5"/>
    <property type="match status" value="1"/>
</dbReference>
<dbReference type="SUPFAM" id="SSF55282">
    <property type="entry name" value="RL5-like"/>
    <property type="match status" value="1"/>
</dbReference>
<dbReference type="PROSITE" id="PS00358">
    <property type="entry name" value="RIBOSOMAL_L5"/>
    <property type="match status" value="1"/>
</dbReference>